<gene>
    <name type="primary">ybjO</name>
    <name type="ordered locus">c0991</name>
</gene>
<sequence>MEDETLGFFKKTSSSHARLNVPALVQVAALAIIMIRGLDVLMIFNTLGVRGIGEFIHRSVQTWSLTLVFLSSLVLVFIEIWCAFSLVKGRRWARWLYLLTQITAASYLWAASLGYGYPELFSIPGESKREIFHSLMLQKLPDMLILMLLFVPSTSRRFFQLQ</sequence>
<feature type="chain" id="PRO_0000168749" description="Inner membrane protein YbjO">
    <location>
        <begin position="1"/>
        <end position="162"/>
    </location>
</feature>
<feature type="topological domain" description="Periplasmic" evidence="2">
    <location>
        <begin position="1"/>
        <end position="23"/>
    </location>
</feature>
<feature type="transmembrane region" description="Helical" evidence="2">
    <location>
        <begin position="24"/>
        <end position="44"/>
    </location>
</feature>
<feature type="topological domain" description="Cytoplasmic" evidence="2">
    <location>
        <begin position="45"/>
        <end position="66"/>
    </location>
</feature>
<feature type="transmembrane region" description="Helical" evidence="2">
    <location>
        <begin position="67"/>
        <end position="87"/>
    </location>
</feature>
<feature type="topological domain" description="Periplasmic" evidence="2">
    <location>
        <begin position="88"/>
        <end position="94"/>
    </location>
</feature>
<feature type="transmembrane region" description="Helical" evidence="2">
    <location>
        <begin position="95"/>
        <end position="115"/>
    </location>
</feature>
<feature type="topological domain" description="Cytoplasmic" evidence="2">
    <location>
        <begin position="116"/>
        <end position="162"/>
    </location>
</feature>
<proteinExistence type="inferred from homology"/>
<protein>
    <recommendedName>
        <fullName>Inner membrane protein YbjO</fullName>
    </recommendedName>
</protein>
<reference key="1">
    <citation type="journal article" date="2002" name="Proc. Natl. Acad. Sci. U.S.A.">
        <title>Extensive mosaic structure revealed by the complete genome sequence of uropathogenic Escherichia coli.</title>
        <authorList>
            <person name="Welch R.A."/>
            <person name="Burland V."/>
            <person name="Plunkett G. III"/>
            <person name="Redford P."/>
            <person name="Roesch P."/>
            <person name="Rasko D."/>
            <person name="Buckles E.L."/>
            <person name="Liou S.-R."/>
            <person name="Boutin A."/>
            <person name="Hackett J."/>
            <person name="Stroud D."/>
            <person name="Mayhew G.F."/>
            <person name="Rose D.J."/>
            <person name="Zhou S."/>
            <person name="Schwartz D.C."/>
            <person name="Perna N.T."/>
            <person name="Mobley H.L.T."/>
            <person name="Donnenberg M.S."/>
            <person name="Blattner F.R."/>
        </authorList>
    </citation>
    <scope>NUCLEOTIDE SEQUENCE [LARGE SCALE GENOMIC DNA]</scope>
    <source>
        <strain>CFT073 / ATCC 700928 / UPEC</strain>
    </source>
</reference>
<comment type="subcellular location">
    <subcellularLocation>
        <location evidence="1">Cell inner membrane</location>
        <topology evidence="1">Multi-pass membrane protein</topology>
    </subcellularLocation>
</comment>
<name>YBJO_ECOL6</name>
<organism>
    <name type="scientific">Escherichia coli O6:H1 (strain CFT073 / ATCC 700928 / UPEC)</name>
    <dbReference type="NCBI Taxonomy" id="199310"/>
    <lineage>
        <taxon>Bacteria</taxon>
        <taxon>Pseudomonadati</taxon>
        <taxon>Pseudomonadota</taxon>
        <taxon>Gammaproteobacteria</taxon>
        <taxon>Enterobacterales</taxon>
        <taxon>Enterobacteriaceae</taxon>
        <taxon>Escherichia</taxon>
    </lineage>
</organism>
<evidence type="ECO:0000250" key="1"/>
<evidence type="ECO:0000255" key="2"/>
<keyword id="KW-0997">Cell inner membrane</keyword>
<keyword id="KW-1003">Cell membrane</keyword>
<keyword id="KW-0472">Membrane</keyword>
<keyword id="KW-1185">Reference proteome</keyword>
<keyword id="KW-0812">Transmembrane</keyword>
<keyword id="KW-1133">Transmembrane helix</keyword>
<accession>P0AAZ1</accession>
<accession>P75816</accession>
<dbReference type="EMBL" id="AE014075">
    <property type="protein sequence ID" value="AAN79464.1"/>
    <property type="molecule type" value="Genomic_DNA"/>
</dbReference>
<dbReference type="RefSeq" id="WP_000389260.1">
    <property type="nucleotide sequence ID" value="NZ_CP051263.1"/>
</dbReference>
<dbReference type="STRING" id="199310.c0991"/>
<dbReference type="KEGG" id="ecc:c0991"/>
<dbReference type="eggNOG" id="ENOG5032W9M">
    <property type="taxonomic scope" value="Bacteria"/>
</dbReference>
<dbReference type="HOGENOM" id="CLU_142271_0_0_6"/>
<dbReference type="BioCyc" id="ECOL199310:C0991-MONOMER"/>
<dbReference type="Proteomes" id="UP000001410">
    <property type="component" value="Chromosome"/>
</dbReference>
<dbReference type="GO" id="GO:0005886">
    <property type="term" value="C:plasma membrane"/>
    <property type="evidence" value="ECO:0007669"/>
    <property type="project" value="UniProtKB-SubCell"/>
</dbReference>
<dbReference type="InterPro" id="IPR019703">
    <property type="entry name" value="YbjO_DH-like"/>
</dbReference>
<dbReference type="Pfam" id="PF10767">
    <property type="entry name" value="YbjO_DH-like"/>
    <property type="match status" value="1"/>
</dbReference>